<gene>
    <name evidence="26" type="primary">TPCN2</name>
    <name evidence="24" type="synonym">TPC2</name>
</gene>
<proteinExistence type="evidence at protein level"/>
<sequence length="752" mass="85243">MAEPQAESEPLLGGARGGGGDWPAGLTTYRSIQVGPGAAARWDLCIDQAVVFIEDAIQYRSINHRVDASSMWLYRRYYSNVCQRTLSFTIFLILFLAFIETPSSLTSTADVRYRAAPWEPPCGLTESVEVLCLLVFAADLSVKGYLFGWAHFQKNLWLLGYLVVLVVSLVDWTVSLSLVCHEPLRIRRLLRPFFLLQNSSMMKKTLKCIRWSLPEMASVGLLLAIHLCLFTMFGMLLFAGGKQDDGQDRERLTYFQNLPESLTSLLVLLTTANNPDVMIPAYSKNRAYAIFFIVFTVIGSLFLMNLLTAIIYSQFRGYLMKSLQTSLFRRRLGTRAAFEVLSSMVGEGGAFPQAVGVKPQNLLQVLQKVQLDSSHKQAMMEKVRSYGSVLLSAEEFQKLFNELDRSVVKEHPPRPEYQSPFLQSAQFLFGHYYFDYLGNLIALANLVSICVFLVLDADVLPAERDDFILGILNCVFIVYYLLEMLLKVFALGLRGYLSYPSNVFDGLLTVVLLVLEISTLAVYRLPHPGWRPEMVGLLSLWDMTRMLNMLIVFRFLRIIPSMKLMAVVASTVLGLVQNMRAFGGILVVVYYVFAIIGINLFRGVIVALPGNSSLAPANGSAPCGSFEQLEYWANNFDDFAAALVTLWNLMVVNNWQVFLDAYRRYSGPWSKIYFVLWWLVSSVIWVNLFLALILENFLHKWDPRSHLQPLAGTPEATYQMTVELLFRDILEEPGEDELTERLSQHPHLWLCR</sequence>
<keyword id="KW-0002">3D-structure</keyword>
<keyword id="KW-0106">Calcium</keyword>
<keyword id="KW-0107">Calcium channel</keyword>
<keyword id="KW-0109">Calcium transport</keyword>
<keyword id="KW-0967">Endosome</keyword>
<keyword id="KW-0325">Glycoprotein</keyword>
<keyword id="KW-0407">Ion channel</keyword>
<keyword id="KW-0406">Ion transport</keyword>
<keyword id="KW-0458">Lysosome</keyword>
<keyword id="KW-0472">Membrane</keyword>
<keyword id="KW-1267">Proteomics identification</keyword>
<keyword id="KW-1185">Reference proteome</keyword>
<keyword id="KW-0677">Repeat</keyword>
<keyword id="KW-0812">Transmembrane</keyword>
<keyword id="KW-1133">Transmembrane helix</keyword>
<keyword id="KW-0813">Transport</keyword>
<keyword id="KW-0851">Voltage-gated channel</keyword>
<protein>
    <recommendedName>
        <fullName>Two pore channel protein 2</fullName>
    </recommendedName>
    <alternativeName>
        <fullName>Two pore calcium channel protein 2</fullName>
    </alternativeName>
</protein>
<organism>
    <name type="scientific">Homo sapiens</name>
    <name type="common">Human</name>
    <dbReference type="NCBI Taxonomy" id="9606"/>
    <lineage>
        <taxon>Eukaryota</taxon>
        <taxon>Metazoa</taxon>
        <taxon>Chordata</taxon>
        <taxon>Craniata</taxon>
        <taxon>Vertebrata</taxon>
        <taxon>Euteleostomi</taxon>
        <taxon>Mammalia</taxon>
        <taxon>Eutheria</taxon>
        <taxon>Euarchontoglires</taxon>
        <taxon>Primates</taxon>
        <taxon>Haplorrhini</taxon>
        <taxon>Catarrhini</taxon>
        <taxon>Hominidae</taxon>
        <taxon>Homo</taxon>
    </lineage>
</organism>
<reference key="1">
    <citation type="journal article" date="2009" name="Nature">
        <title>NAADP mobilizes calcium from acidic organelles through two-pore channels.</title>
        <authorList>
            <person name="Calcraft P.J."/>
            <person name="Ruas M."/>
            <person name="Pan Z."/>
            <person name="Cheng X."/>
            <person name="Arredouani A."/>
            <person name="Hao X."/>
            <person name="Tang J."/>
            <person name="Rietdorf K."/>
            <person name="Teboul L."/>
            <person name="Chuang K.T."/>
            <person name="Lin P."/>
            <person name="Xiao R."/>
            <person name="Wang C."/>
            <person name="Zhu Y."/>
            <person name="Lin Y."/>
            <person name="Wyatt C.N."/>
            <person name="Parrington J."/>
            <person name="Ma J."/>
            <person name="Evans A.M."/>
            <person name="Galione A."/>
            <person name="Zhu M.X."/>
        </authorList>
    </citation>
    <scope>NUCLEOTIDE SEQUENCE [MRNA]</scope>
    <scope>FUNCTION</scope>
    <scope>SUBCELLULAR LOCATION</scope>
    <scope>TISSUE SPECIFICITY</scope>
    <scope>VARIANTS PRO-564 AND GLU-734</scope>
    <scope>CATALYTIC ACTIVITY</scope>
</reference>
<reference key="2">
    <citation type="journal article" date="2006" name="Nature">
        <title>Human chromosome 11 DNA sequence and analysis including novel gene identification.</title>
        <authorList>
            <person name="Taylor T.D."/>
            <person name="Noguchi H."/>
            <person name="Totoki Y."/>
            <person name="Toyoda A."/>
            <person name="Kuroki Y."/>
            <person name="Dewar K."/>
            <person name="Lloyd C."/>
            <person name="Itoh T."/>
            <person name="Takeda T."/>
            <person name="Kim D.-W."/>
            <person name="She X."/>
            <person name="Barlow K.F."/>
            <person name="Bloom T."/>
            <person name="Bruford E."/>
            <person name="Chang J.L."/>
            <person name="Cuomo C.A."/>
            <person name="Eichler E."/>
            <person name="FitzGerald M.G."/>
            <person name="Jaffe D.B."/>
            <person name="LaButti K."/>
            <person name="Nicol R."/>
            <person name="Park H.-S."/>
            <person name="Seaman C."/>
            <person name="Sougnez C."/>
            <person name="Yang X."/>
            <person name="Zimmer A.R."/>
            <person name="Zody M.C."/>
            <person name="Birren B.W."/>
            <person name="Nusbaum C."/>
            <person name="Fujiyama A."/>
            <person name="Hattori M."/>
            <person name="Rogers J."/>
            <person name="Lander E.S."/>
            <person name="Sakaki Y."/>
        </authorList>
    </citation>
    <scope>NUCLEOTIDE SEQUENCE [LARGE SCALE GENOMIC DNA]</scope>
</reference>
<reference key="3">
    <citation type="journal article" date="2004" name="Genome Res.">
        <title>The status, quality, and expansion of the NIH full-length cDNA project: the Mammalian Gene Collection (MGC).</title>
        <authorList>
            <consortium name="The MGC Project Team"/>
        </authorList>
    </citation>
    <scope>NUCLEOTIDE SEQUENCE [LARGE SCALE MRNA]</scope>
    <scope>VARIANTS PRO-564 AND GLU-734</scope>
    <source>
        <tissue>Blood</tissue>
    </source>
</reference>
<reference key="4">
    <citation type="journal article" date="2007" name="BMC Genomics">
        <title>The full-ORF clone resource of the German cDNA consortium.</title>
        <authorList>
            <person name="Bechtel S."/>
            <person name="Rosenfelder H."/>
            <person name="Duda A."/>
            <person name="Schmidt C.P."/>
            <person name="Ernst U."/>
            <person name="Wellenreuther R."/>
            <person name="Mehrle A."/>
            <person name="Schuster C."/>
            <person name="Bahr A."/>
            <person name="Bloecker H."/>
            <person name="Heubner D."/>
            <person name="Hoerlein A."/>
            <person name="Michel G."/>
            <person name="Wedler H."/>
            <person name="Koehrer K."/>
            <person name="Ottenwaelder B."/>
            <person name="Poustka A."/>
            <person name="Wiemann S."/>
            <person name="Schupp I."/>
        </authorList>
    </citation>
    <scope>NUCLEOTIDE SEQUENCE [LARGE SCALE MRNA] OF 382-752</scope>
    <scope>VARIANTS PRO-564 AND GLU-734</scope>
    <source>
        <tissue>Testis</tissue>
    </source>
</reference>
<reference key="5">
    <citation type="journal article" date="2009" name="J. Cell Biol.">
        <title>Essential requirement for two-pore channel 1 in NAADP-mediated calcium signaling.</title>
        <authorList>
            <person name="Brailoiu E."/>
            <person name="Churamani D."/>
            <person name="Cai X."/>
            <person name="Schrlau M.G."/>
            <person name="Brailoiu G.C."/>
            <person name="Gao X."/>
            <person name="Hooper R."/>
            <person name="Boulware M.J."/>
            <person name="Dun N.J."/>
            <person name="Marchant J.S."/>
            <person name="Patel S."/>
        </authorList>
    </citation>
    <scope>FUNCTION</scope>
    <scope>SUBCELLULAR LOCATION</scope>
</reference>
<reference key="6">
    <citation type="journal article" date="2010" name="J. Biol. Chem.">
        <title>An NAADP-gated two-pore channel targeted to the plasma membrane uncouples triggering from amplifying Ca2+ signals.</title>
        <authorList>
            <person name="Brailoiu E."/>
            <person name="Rahman T."/>
            <person name="Churamani D."/>
            <person name="Prole D.L."/>
            <person name="Brailoiu G.C."/>
            <person name="Hooper R."/>
            <person name="Taylor C.W."/>
            <person name="Patel S."/>
        </authorList>
    </citation>
    <scope>FUNCTION</scope>
    <scope>SUBCELLULAR LOCATION</scope>
    <scope>CATALYTIC ACTIVITY</scope>
    <scope>MUTAGENESIS OF 11-LEU-LEU-12 AND LEU-265</scope>
</reference>
<reference key="7">
    <citation type="journal article" date="2012" name="Cell">
        <title>TPC proteins are phosphoinositide- activated sodium-selective ion channels in endosomes and lysosomes.</title>
        <authorList>
            <person name="Wang X."/>
            <person name="Zhang X."/>
            <person name="Dong X.P."/>
            <person name="Samie M."/>
            <person name="Li X."/>
            <person name="Cheng X."/>
            <person name="Goschka A."/>
            <person name="Shen D."/>
            <person name="Zhou Y."/>
            <person name="Harlow J."/>
            <person name="Zhu M.X."/>
            <person name="Clapham D.E."/>
            <person name="Ren D."/>
            <person name="Xu H."/>
        </authorList>
    </citation>
    <scope>FUNCTION</scope>
    <scope>CATALYTIC ACTIVITY</scope>
    <scope>MUTAGENESIS OF ASP-276</scope>
    <scope>SUBCELLULAR LOCATION</scope>
</reference>
<reference key="8">
    <citation type="journal article" date="2012" name="Hum. Mol. Genet.">
        <title>Leucine-rich repeat kinase 2 regulates autophagy through a calcium-dependent pathway involving NAADP.</title>
        <authorList>
            <person name="Gomez-Suaga P."/>
            <person name="Luzon-Toro B."/>
            <person name="Churamani D."/>
            <person name="Zhang L."/>
            <person name="Bloor-Young D."/>
            <person name="Patel S."/>
            <person name="Woodman P.G."/>
            <person name="Churchill G.C."/>
            <person name="Hilfiker S."/>
        </authorList>
    </citation>
    <scope>INTERACTION WITH LRRK2</scope>
</reference>
<reference key="9">
    <citation type="journal article" date="2013" name="Cell">
        <title>mTOR regulates lysosomal ATP-sensitive two-pore Na(+) channels to adapt to metabolic state.</title>
        <authorList>
            <person name="Cang C."/>
            <person name="Zhou Y."/>
            <person name="Navarro B."/>
            <person name="Seo Y.J."/>
            <person name="Aranda K."/>
            <person name="Shi L."/>
            <person name="Battaglia-Hsu S."/>
            <person name="Nissim I."/>
            <person name="Clapham D.E."/>
            <person name="Ren D."/>
        </authorList>
    </citation>
    <scope>FUNCTION</scope>
    <scope>CATALYTIC ACTIVITY</scope>
    <scope>INTERACTION WITH MTOR</scope>
</reference>
<reference key="10">
    <citation type="journal article" date="2013" name="FEBS Lett.">
        <title>Hax-1 identified as a two-pore channel (TPC)-binding protein.</title>
        <authorList>
            <person name="Lam A.K."/>
            <person name="Galione A."/>
            <person name="Lai F.A."/>
            <person name="Zissimopoulos S."/>
        </authorList>
    </citation>
    <scope>INTERACTION WITH HAX1</scope>
</reference>
<reference key="11">
    <citation type="journal article" date="2014" name="EMBO J.">
        <title>Convergent regulation of the lysosomal two-pore channel-2 by Mg(2+), NAADP, PI(3,5)P(2) and multiple protein kinases.</title>
        <authorList>
            <person name="Jha A."/>
            <person name="Ahuja M."/>
            <person name="Patel S."/>
            <person name="Brailoiu E."/>
            <person name="Muallem S."/>
        </authorList>
    </citation>
    <scope>ACTIVITY REGULATION</scope>
    <scope>FUNCTION</scope>
    <scope>CATALYTIC ACTIVITY</scope>
    <scope>MUTAGENESIS OF 11-LEU-LEU-12</scope>
</reference>
<reference key="12">
    <citation type="journal article" date="2014" name="Nat. Chem. Biol.">
        <title>The voltage-gated sodium channel TPC1 confers endolysosomal excitability.</title>
        <authorList>
            <person name="Cang C."/>
            <person name="Bekele B."/>
            <person name="Ren D."/>
        </authorList>
    </citation>
    <scope>FUNCTION</scope>
    <scope>CATALYTIC ACTIVITY</scope>
</reference>
<reference key="13">
    <citation type="journal article" date="2015" name="Science">
        <title>Ebola virus. Two-pore channels control Ebola virus host cell entry and are drug targets for disease treatment.</title>
        <authorList>
            <person name="Sakurai Y."/>
            <person name="Kolokoltsov A.A."/>
            <person name="Chen C.C."/>
            <person name="Tidwell M.W."/>
            <person name="Bauta W.E."/>
            <person name="Klugbauer N."/>
            <person name="Grimm C."/>
            <person name="Wahl-Schott C."/>
            <person name="Biel M."/>
            <person name="Davey R.A."/>
        </authorList>
    </citation>
    <scope>FUNCTION (MICROBIAL INFECTION)</scope>
    <scope>ACTIVITY REGULATION</scope>
    <scope>SUBCELLULAR LOCATION</scope>
    <scope>MUTAGENESIS OF LEU-265</scope>
</reference>
<reference key="14">
    <citation type="journal article" date="2016" name="Proc. Natl. Acad. Sci. U.S.A.">
        <title>TPC2 controls pigmentation by regulating melanosome pH and size.</title>
        <authorList>
            <person name="Ambrosio A.L."/>
            <person name="Boyle J.A."/>
            <person name="Aradi A.E."/>
            <person name="Christian K.A."/>
            <person name="Di Pietro S.M."/>
        </authorList>
    </citation>
    <scope>FUNCTION</scope>
    <scope>CATALYTIC ACTIVITY</scope>
    <scope>SUBCELLULAR LOCATION</scope>
</reference>
<reference key="15">
    <citation type="journal article" date="2019" name="Elife">
        <title>Agonist-specific voltage-dependent gating of lysosomal two-pore Na+ channels.</title>
        <authorList>
            <person name="Zhang X."/>
            <person name="Chen W."/>
            <person name="Li P."/>
            <person name="Calvo R."/>
            <person name="Southall N."/>
            <person name="Hu X."/>
            <person name="Bryant-Genevier M."/>
            <person name="Feng X."/>
            <person name="Geng Q."/>
            <person name="Gao C."/>
            <person name="Yang M."/>
            <person name="Tang K."/>
            <person name="Ferrer M."/>
            <person name="Marugan J.J."/>
            <person name="Xu H."/>
        </authorList>
    </citation>
    <scope>FUNCTION</scope>
    <scope>SUBCELLULAR LOCATION</scope>
    <scope>CATALYTIC ACTIVITY</scope>
</reference>
<reference key="16">
    <citation type="journal article" date="2020" name="Elife">
        <title>Agonist-mediated switching of ion selectivity in TPC2 differentially promotes lysosomal function.</title>
        <authorList>
            <person name="Gerndt S."/>
            <person name="Chen C.C."/>
            <person name="Chao Y.K."/>
            <person name="Yuan Y."/>
            <person name="Burgstaller S."/>
            <person name="Scotto Rosato A."/>
            <person name="Krogsaeter E."/>
            <person name="Urban N."/>
            <person name="Jacob K."/>
            <person name="Nguyen O.N.P."/>
            <person name="Miller M.T."/>
            <person name="Keller M."/>
            <person name="Vollmar A.M."/>
            <person name="Gudermann T."/>
            <person name="Zierler S."/>
            <person name="Schredelseker J."/>
            <person name="Schaefer M."/>
            <person name="Biel M."/>
            <person name="Malli R."/>
            <person name="Wahl-Schott C."/>
            <person name="Bracher F."/>
            <person name="Patel S."/>
            <person name="Grimm C."/>
        </authorList>
    </citation>
    <scope>FUNCTION</scope>
    <scope>CATALYTIC ACTIVITY</scope>
    <scope>SUBCELLULAR LOCATION</scope>
    <scope>MUTAGENESIS OF LYS-204</scope>
    <scope>CHARACTERIZATION OF VARIANT LEU-484</scope>
</reference>
<reference key="17">
    <citation type="journal article" date="2020" name="Nat. Commun.">
        <title>Characterization of spike glycoprotein of SARS-CoV-2 on virus entry and its immune cross-reactivity with SARS-CoV.</title>
        <authorList>
            <person name="Ou X."/>
            <person name="Liu Y."/>
            <person name="Lei X."/>
            <person name="Li P."/>
            <person name="Mi D."/>
            <person name="Ren L."/>
            <person name="Guo L."/>
            <person name="Guo R."/>
            <person name="Chen T."/>
            <person name="Hu J."/>
            <person name="Xiang Z."/>
            <person name="Mu Z."/>
            <person name="Chen X."/>
            <person name="Chen J."/>
            <person name="Hu K."/>
            <person name="Jin Q."/>
            <person name="Wang J."/>
            <person name="Qian Z."/>
        </authorList>
    </citation>
    <scope>FUNCTION (MICROBIAL INFECTION)</scope>
    <scope>ACTIVITY REGULATION</scope>
</reference>
<reference key="18">
    <citation type="journal article" date="2021" name="Nat. Commun.">
        <title>Author Correction: Characterization of spike glycoprotein of SARS-CoV-2 on virus entry and its immune cross-reactivity with SARS-CoV.</title>
        <authorList>
            <person name="Ou X."/>
            <person name="Liu Y."/>
            <person name="Lei X."/>
            <person name="Li P."/>
            <person name="Mi D."/>
            <person name="Ren L."/>
            <person name="Guo L."/>
            <person name="Guo R."/>
            <person name="Chen T."/>
            <person name="Hu J."/>
            <person name="Xiang Z."/>
            <person name="Mu Z."/>
            <person name="Chen X."/>
            <person name="Chen J."/>
            <person name="Hu K."/>
            <person name="Jin Q."/>
            <person name="Wang J."/>
            <person name="Qian Z."/>
        </authorList>
    </citation>
    <scope>ERRATUM OF PUBMED:32221306</scope>
</reference>
<reference key="19">
    <citation type="journal article" date="2020" name="Trends Pharmacol. Sci.">
        <title>Targeting Two-Pore Channels: Current Progress and Future Challenges.</title>
        <authorList>
            <person name="Jin X."/>
            <person name="Zhang Y."/>
            <person name="Alharbi A."/>
            <person name="Hanbashi A."/>
            <person name="Alhoshani A."/>
            <person name="Parrington J."/>
        </authorList>
    </citation>
    <scope>REVIEW OF FUNCTION</scope>
</reference>
<reference key="20">
    <citation type="journal article" date="2021" name="Nat. Commun.">
        <title>Lsm12 is an NAADP receptor and a two-pore channel regulatory protein required for calcium mobilization from acidic organelles.</title>
        <authorList>
            <person name="Zhang J."/>
            <person name="Guan X."/>
            <person name="Shah K."/>
            <person name="Yan J."/>
        </authorList>
    </citation>
    <scope>SUBUNIT</scope>
    <scope>INTERACTION WITH LSM12</scope>
</reference>
<reference evidence="27 28 29" key="21">
    <citation type="journal article" date="2019" name="Elife">
        <title>Structural mechanisms of phospholipid activation of the human TPC2 channel.</title>
        <authorList>
            <person name="She J."/>
            <person name="Zeng W."/>
            <person name="Guo J."/>
            <person name="Chen Q."/>
            <person name="Bai X.C."/>
            <person name="Jiang Y."/>
        </authorList>
    </citation>
    <scope>STRUCTURE BY ELECTRON MICROSCOPY (3.40 ANGSTROMS) IN COMPLEX WITH PHOSPHATIDYLINOSITOL 3,5-BISPHOSPHATE</scope>
    <scope>SUBUNIT</scope>
    <scope>MUTAGENESIS OF LYS-203; LYS-204; LYS-207; SER-322; ARG-329 AND ILE-551</scope>
    <scope>CATALYTIC ACTIVITY</scope>
</reference>
<reference key="22">
    <citation type="journal article" date="2008" name="Nat. Genet.">
        <title>Two newly identified genetic determinants of pigmentation in Europeans.</title>
        <authorList>
            <person name="Sulem P."/>
            <person name="Gudbjartsson D.F."/>
            <person name="Stacey S.N."/>
            <person name="Helgason A."/>
            <person name="Rafnar T."/>
            <person name="Jakobsdottir M."/>
            <person name="Steinberg S."/>
            <person name="Gudjonsson S.A."/>
            <person name="Palsson A."/>
            <person name="Thorleifsson G."/>
            <person name="Palsson S."/>
            <person name="Sigurgeirsson B."/>
            <person name="Thorisdottir K."/>
            <person name="Ragnarsson R."/>
            <person name="Benediktsdottir K.R."/>
            <person name="Aben K.K."/>
            <person name="Vermeulen S.H."/>
            <person name="Goldstein A.M."/>
            <person name="Tucker M.A."/>
            <person name="Kiemeney L.A."/>
            <person name="Olafsson J.H."/>
            <person name="Gulcher J."/>
            <person name="Kong A."/>
            <person name="Thorsteinsdottir U."/>
            <person name="Stefansson K."/>
        </authorList>
    </citation>
    <scope>VARIANTS LEU-484 AND GLU-734</scope>
    <scope>ASSOCIATION WITH SHEP10</scope>
</reference>
<comment type="function">
    <text evidence="2 6 7 8 9 11 12 14 15 17 18 19 20 22">Intracellular channel initially characterized as a non-selective Ca(2+)-permeable channel activated by NAADP (nicotinic acid adenine dinucleotide phosphate), it is also a highly-selective Na(+) channel activated directly by PI(3,5)P2 (phosphatidylinositol 3,5-bisphosphate) (PubMed:19387438, PubMed:19620632, PubMed:20880839, PubMed:23063126, PubMed:23394946, PubMed:24502975, PubMed:24776928, PubMed:30860481, PubMed:31825310, PubMed:32167471). Localizes to the lysosomal and late endosome membranes where it regulates organellar membrane excitability, membrane trafficking, and pH homeostasis. Is associated with a plethora of physiological processes, including mTOR-dependent nutrient sensing, skin pigmentation and autophagy (PubMed:18488028, PubMed:23394946, PubMed:32167471). Ion selectivity is not fixed but rather agonist-dependent and under defined ionic conditions, can be readily activated by both NAADP and PI(3,5)P2 (PubMed:24502975, PubMed:31825310, PubMed:32167471). As calcium channel, it increases the pH in the lysosomal lumen, as sodium channel, it promotes lysosomal exocytosis (PubMed:31825310, PubMed:32167471). Plays a crucial role in endolysosomal trafficking in the endolysosomal degradation pathway and is potentially involved in the homeostatic control of many macromolecules and cell metabolites (By similarity) (PubMed:18488028, PubMed:19387438, PubMed:19620632, PubMed:20880839, PubMed:23063126, PubMed:23394946, PubMed:24502975, PubMed:24776928, PubMed:31825310, PubMed:32167471, PubMed:32679067). Also expressed in melanosomes of pigmented cells where mediates a Ca(2+) channel and/or PI(3,5)P2-activated melanosomal Na(+) channel to acidify pH and inhibit tyrosinase activity required for melanogenesis and pigmentation (PubMed:27140606). Unlike the voltage-dependent TPCN1, TPCN2 is voltage independent and can be activated solely by PI(3,5)P2 binding. In contrast, PI(4,5)P2, PI(3,4)P2, PI(3)P and PI(5)P have no obvious effect on channel activation (PubMed:30860481).</text>
</comment>
<comment type="function">
    <text evidence="16">(Microbial infection) During Ebola virus (EBOV) infection, controls the movement of endosomes containing virus particles and is required by EBOV to escape from the endosomal network into the cell cytoplasm.</text>
</comment>
<comment type="function">
    <text evidence="21">(Microbial infection) Required for cell entry of coronaviruses SARS-CoV and SARS-CoV-2, as well as human coronavirus EMC (HCoV-EMC), by endocytosis.</text>
</comment>
<comment type="catalytic activity">
    <reaction evidence="11 12 14 15 18 19 20">
        <text>Na(+)(in) = Na(+)(out)</text>
        <dbReference type="Rhea" id="RHEA:34963"/>
        <dbReference type="ChEBI" id="CHEBI:29101"/>
    </reaction>
    <physiologicalReaction direction="right-to-left" evidence="11 12 14 15 18 19 20">
        <dbReference type="Rhea" id="RHEA:34965"/>
    </physiologicalReaction>
</comment>
<comment type="catalytic activity">
    <reaction evidence="7 9 14 17 20">
        <text>Ca(2+)(in) = Ca(2+)(out)</text>
        <dbReference type="Rhea" id="RHEA:29671"/>
        <dbReference type="ChEBI" id="CHEBI:29108"/>
    </reaction>
    <physiologicalReaction direction="right-to-left" evidence="7 9 14 20">
        <dbReference type="Rhea" id="RHEA:29673"/>
    </physiologicalReaction>
</comment>
<comment type="activity regulation">
    <text evidence="12 14 16 21">Regulated by Mg(2+) ions, cytosolic Mg(2+) selectively inhibits outward current while lysosomal Mg(2+) modestly inhibits both the outward and inward currents. In the absence of Mg(2+), NAADP readily activates TPCN2, with properties similar to PI(3,5)P2 (PubMed:24502975). Na(+) current is inhibited by ATP in a MTORC-dependent manner. ATP sensitivity is independent of PI(3,5)P2 (PubMed:23394946). Both current elicited by PI(3,5)P2 as well as NAADP are inhibited by tetrandrine.</text>
</comment>
<comment type="subunit">
    <text evidence="10 12 13 18 23">Homodimer (PubMed:30860481). Interacts with LRRK2 (PubMed:22012985). Interacts with HAX1 (PubMed:24188827). Interacts with MTOR; the interaction is required for TPCN2 ATP sensitivity (PubMed:23394946). Found in a complex with LSM12, TPCN1 and TPCN2 (PubMed:34362892). Interacts with LSM12 (PubMed:34362892).</text>
</comment>
<comment type="interaction">
    <interactant intactId="EBI-5239949">
        <id>Q8NHX9</id>
    </interactant>
    <interactant intactId="EBI-357001">
        <id>O00165</id>
        <label>HAX1</label>
    </interactant>
    <organismsDiffer>false</organismsDiffer>
    <experiments>4</experiments>
</comment>
<comment type="interaction">
    <interactant intactId="EBI-5239949">
        <id>Q8NHX9</id>
    </interactant>
    <interactant intactId="EBI-359260">
        <id>P42345</id>
        <label>MTOR</label>
    </interactant>
    <organismsDiffer>false</organismsDiffer>
    <experiments>2</experiments>
</comment>
<comment type="interaction">
    <interactant intactId="EBI-5239949">
        <id>Q8NHX9</id>
    </interactant>
    <interactant intactId="EBI-5239895">
        <id>Q9ULQ1</id>
        <label>TPCN1</label>
    </interactant>
    <organismsDiffer>false</organismsDiffer>
    <experiments>9</experiments>
</comment>
<comment type="interaction">
    <interactant intactId="EBI-5239949">
        <id>Q8NHX9</id>
    </interactant>
    <interactant intactId="EBI-5239949">
        <id>Q8NHX9</id>
        <label>TPCN2</label>
    </interactant>
    <organismsDiffer>false</organismsDiffer>
    <experiments>4</experiments>
</comment>
<comment type="subcellular location">
    <subcellularLocation>
        <location evidence="20">Late endosome membrane</location>
        <topology evidence="3">Multi-pass membrane protein</topology>
    </subcellularLocation>
    <subcellularLocation>
        <location evidence="9 11 19 20">Lysosome membrane</location>
        <topology evidence="3">Multi-pass membrane protein</topology>
    </subcellularLocation>
    <subcellularLocation>
        <location evidence="17">Melanosome membrane</location>
        <topology evidence="3">Multi-pass membrane protein</topology>
    </subcellularLocation>
</comment>
<comment type="tissue specificity">
    <text evidence="7">Widely expressed. Expressed at high level in liver and kidney.</text>
</comment>
<comment type="domain">
    <text evidence="1">Each of the two internal repeats contains five hydrophobic transmembrane segments (S1, S2, S3, S5, S6) and one positively charged transmembrane segment (S4). S4 segments probably represent the voltage-sensor and are characterized by a series of positively charged amino acids at every third position (By similarity).</text>
</comment>
<comment type="PTM">
    <text evidence="2">N-glycosylated.</text>
</comment>
<comment type="polymorphism">
    <text evidence="6">Genetic variants in TPCN2 define the skin/hair/eye pigmentation variation locus 10 (SHEP10) [MIM:612267]. Hair, eye and skin pigmentation are among the most visible examples of human phenotypic variation, with a broad normal range that is subject to substantial geographic stratification. In the case of skin, individuals tend to have lighter pigmentation with increasing distance from the equator. By contrast, the majority of variation in human eye and hair color is found among individuals of European ancestry, with most other human populations fixed for brown eyes and black hair.</text>
</comment>
<comment type="similarity">
    <text evidence="25">Belongs to the calcium channel alpha-1 subunit (TC 1.A.1.11) family. Two pore calcium channel subfamily.</text>
</comment>
<evidence type="ECO:0000250" key="1"/>
<evidence type="ECO:0000250" key="2">
    <source>
        <dbReference type="UniProtKB" id="Q8BWC0"/>
    </source>
</evidence>
<evidence type="ECO:0000255" key="3"/>
<evidence type="ECO:0000269" key="4">
    <source>
    </source>
</evidence>
<evidence type="ECO:0000269" key="5">
    <source>
    </source>
</evidence>
<evidence type="ECO:0000269" key="6">
    <source>
    </source>
</evidence>
<evidence type="ECO:0000269" key="7">
    <source>
    </source>
</evidence>
<evidence type="ECO:0000269" key="8">
    <source>
    </source>
</evidence>
<evidence type="ECO:0000269" key="9">
    <source>
    </source>
</evidence>
<evidence type="ECO:0000269" key="10">
    <source>
    </source>
</evidence>
<evidence type="ECO:0000269" key="11">
    <source>
    </source>
</evidence>
<evidence type="ECO:0000269" key="12">
    <source>
    </source>
</evidence>
<evidence type="ECO:0000269" key="13">
    <source>
    </source>
</evidence>
<evidence type="ECO:0000269" key="14">
    <source>
    </source>
</evidence>
<evidence type="ECO:0000269" key="15">
    <source>
    </source>
</evidence>
<evidence type="ECO:0000269" key="16">
    <source>
    </source>
</evidence>
<evidence type="ECO:0000269" key="17">
    <source>
    </source>
</evidence>
<evidence type="ECO:0000269" key="18">
    <source>
    </source>
</evidence>
<evidence type="ECO:0000269" key="19">
    <source>
    </source>
</evidence>
<evidence type="ECO:0000269" key="20">
    <source>
    </source>
</evidence>
<evidence type="ECO:0000269" key="21">
    <source>
    </source>
</evidence>
<evidence type="ECO:0000269" key="22">
    <source>
    </source>
</evidence>
<evidence type="ECO:0000269" key="23">
    <source>
    </source>
</evidence>
<evidence type="ECO:0000303" key="24">
    <source>
    </source>
</evidence>
<evidence type="ECO:0000305" key="25"/>
<evidence type="ECO:0000312" key="26">
    <source>
        <dbReference type="HGNC" id="HGNC:20820"/>
    </source>
</evidence>
<evidence type="ECO:0007744" key="27">
    <source>
        <dbReference type="PDB" id="6NQ0"/>
    </source>
</evidence>
<evidence type="ECO:0007744" key="28">
    <source>
        <dbReference type="PDB" id="6NQ1"/>
    </source>
</evidence>
<evidence type="ECO:0007744" key="29">
    <source>
        <dbReference type="PDB" id="6NQ2"/>
    </source>
</evidence>
<evidence type="ECO:0007829" key="30">
    <source>
        <dbReference type="PDB" id="6NQ1"/>
    </source>
</evidence>
<evidence type="ECO:0007829" key="31">
    <source>
        <dbReference type="PDB" id="8OUO"/>
    </source>
</evidence>
<accession>Q8NHX9</accession>
<accession>Q9NT82</accession>
<name>TPC2_HUMAN</name>
<dbReference type="EMBL" id="AY029200">
    <property type="protein sequence ID" value="AAK31802.1"/>
    <property type="molecule type" value="mRNA"/>
</dbReference>
<dbReference type="EMBL" id="AP003071">
    <property type="status" value="NOT_ANNOTATED_CDS"/>
    <property type="molecule type" value="Genomic_DNA"/>
</dbReference>
<dbReference type="EMBL" id="BC063008">
    <property type="protein sequence ID" value="AAH63008.1"/>
    <property type="molecule type" value="mRNA"/>
</dbReference>
<dbReference type="EMBL" id="AL137479">
    <property type="protein sequence ID" value="CAB70760.1"/>
    <property type="molecule type" value="mRNA"/>
</dbReference>
<dbReference type="CCDS" id="CCDS8189.1"/>
<dbReference type="PIR" id="T46421">
    <property type="entry name" value="T46421"/>
</dbReference>
<dbReference type="RefSeq" id="NP_620714.2">
    <property type="nucleotide sequence ID" value="NM_139075.4"/>
</dbReference>
<dbReference type="PDB" id="6NQ0">
    <property type="method" value="EM"/>
    <property type="resolution" value="3.70 A"/>
    <property type="chains" value="A/B=1-752"/>
</dbReference>
<dbReference type="PDB" id="6NQ1">
    <property type="method" value="EM"/>
    <property type="resolution" value="3.50 A"/>
    <property type="chains" value="A/B=1-752"/>
</dbReference>
<dbReference type="PDB" id="6NQ2">
    <property type="method" value="EM"/>
    <property type="resolution" value="3.40 A"/>
    <property type="chains" value="A/B=1-752"/>
</dbReference>
<dbReference type="PDB" id="8OUO">
    <property type="method" value="EM"/>
    <property type="resolution" value="3.00 A"/>
    <property type="chains" value="A/B=1-752"/>
</dbReference>
<dbReference type="PDBsum" id="6NQ0"/>
<dbReference type="PDBsum" id="6NQ1"/>
<dbReference type="PDBsum" id="6NQ2"/>
<dbReference type="PDBsum" id="8OUO"/>
<dbReference type="EMDB" id="EMD-0477"/>
<dbReference type="EMDB" id="EMD-0478"/>
<dbReference type="EMDB" id="EMD-0479"/>
<dbReference type="EMDB" id="EMD-17197"/>
<dbReference type="SMR" id="Q8NHX9"/>
<dbReference type="BioGRID" id="128596">
    <property type="interactions" value="78"/>
</dbReference>
<dbReference type="FunCoup" id="Q8NHX9">
    <property type="interactions" value="401"/>
</dbReference>
<dbReference type="IntAct" id="Q8NHX9">
    <property type="interactions" value="62"/>
</dbReference>
<dbReference type="MINT" id="Q8NHX9"/>
<dbReference type="STRING" id="9606.ENSP00000294309"/>
<dbReference type="DrugCentral" id="Q8NHX9"/>
<dbReference type="GuidetoPHARMACOLOGY" id="393"/>
<dbReference type="TCDB" id="1.A.1.11.19">
    <property type="family name" value="the voltage-gated ion channel (vic) superfamily"/>
</dbReference>
<dbReference type="GlyCosmos" id="Q8NHX9">
    <property type="glycosylation" value="2 sites, No reported glycans"/>
</dbReference>
<dbReference type="GlyGen" id="Q8NHX9">
    <property type="glycosylation" value="2 sites"/>
</dbReference>
<dbReference type="iPTMnet" id="Q8NHX9"/>
<dbReference type="PhosphoSitePlus" id="Q8NHX9"/>
<dbReference type="BioMuta" id="TPCN2"/>
<dbReference type="DMDM" id="125991221"/>
<dbReference type="jPOST" id="Q8NHX9"/>
<dbReference type="MassIVE" id="Q8NHX9"/>
<dbReference type="PaxDb" id="9606-ENSP00000294309"/>
<dbReference type="PeptideAtlas" id="Q8NHX9"/>
<dbReference type="ProteomicsDB" id="73782"/>
<dbReference type="Pumba" id="Q8NHX9"/>
<dbReference type="Antibodypedia" id="16750">
    <property type="antibodies" value="93 antibodies from 24 providers"/>
</dbReference>
<dbReference type="DNASU" id="219931"/>
<dbReference type="Ensembl" id="ENST00000294309.8">
    <property type="protein sequence ID" value="ENSP00000294309.3"/>
    <property type="gene ID" value="ENSG00000162341.18"/>
</dbReference>
<dbReference type="GeneID" id="219931"/>
<dbReference type="KEGG" id="hsa:219931"/>
<dbReference type="MANE-Select" id="ENST00000294309.8">
    <property type="protein sequence ID" value="ENSP00000294309.3"/>
    <property type="RefSeq nucleotide sequence ID" value="NM_139075.4"/>
    <property type="RefSeq protein sequence ID" value="NP_620714.2"/>
</dbReference>
<dbReference type="UCSC" id="uc001oos.3">
    <property type="organism name" value="human"/>
</dbReference>
<dbReference type="AGR" id="HGNC:20820"/>
<dbReference type="CTD" id="219931"/>
<dbReference type="DisGeNET" id="219931"/>
<dbReference type="GeneCards" id="TPCN2"/>
<dbReference type="HGNC" id="HGNC:20820">
    <property type="gene designation" value="TPCN2"/>
</dbReference>
<dbReference type="HPA" id="ENSG00000162341">
    <property type="expression patterns" value="Low tissue specificity"/>
</dbReference>
<dbReference type="MalaCards" id="TPCN2"/>
<dbReference type="MIM" id="612163">
    <property type="type" value="gene"/>
</dbReference>
<dbReference type="MIM" id="612267">
    <property type="type" value="phenotype"/>
</dbReference>
<dbReference type="neXtProt" id="NX_Q8NHX9"/>
<dbReference type="OpenTargets" id="ENSG00000162341"/>
<dbReference type="PharmGKB" id="PA134937857"/>
<dbReference type="VEuPathDB" id="HostDB:ENSG00000162341"/>
<dbReference type="eggNOG" id="KOG2301">
    <property type="taxonomic scope" value="Eukaryota"/>
</dbReference>
<dbReference type="GeneTree" id="ENSGT00940000159763"/>
<dbReference type="HOGENOM" id="CLU_019500_1_0_1"/>
<dbReference type="InParanoid" id="Q8NHX9"/>
<dbReference type="OMA" id="FTESIEM"/>
<dbReference type="OrthoDB" id="416585at2759"/>
<dbReference type="PAN-GO" id="Q8NHX9">
    <property type="GO annotations" value="5 GO annotations based on evolutionary models"/>
</dbReference>
<dbReference type="PhylomeDB" id="Q8NHX9"/>
<dbReference type="TreeFam" id="TF328550"/>
<dbReference type="PathwayCommons" id="Q8NHX9"/>
<dbReference type="Reactome" id="R-HSA-2672351">
    <property type="pathway name" value="Stimuli-sensing channels"/>
</dbReference>
<dbReference type="SignaLink" id="Q8NHX9"/>
<dbReference type="BioGRID-ORCS" id="219931">
    <property type="hits" value="6 hits in 1158 CRISPR screens"/>
</dbReference>
<dbReference type="ChiTaRS" id="TPCN2">
    <property type="organism name" value="human"/>
</dbReference>
<dbReference type="GeneWiki" id="TPCN2"/>
<dbReference type="GenomeRNAi" id="219931"/>
<dbReference type="Pharos" id="Q8NHX9">
    <property type="development level" value="Tchem"/>
</dbReference>
<dbReference type="PRO" id="PR:Q8NHX9"/>
<dbReference type="Proteomes" id="UP000005640">
    <property type="component" value="Chromosome 11"/>
</dbReference>
<dbReference type="RNAct" id="Q8NHX9">
    <property type="molecule type" value="protein"/>
</dbReference>
<dbReference type="Bgee" id="ENSG00000162341">
    <property type="expression patterns" value="Expressed in pancreatic ductal cell and 170 other cell types or tissues"/>
</dbReference>
<dbReference type="ExpressionAtlas" id="Q8NHX9">
    <property type="expression patterns" value="baseline and differential"/>
</dbReference>
<dbReference type="GO" id="GO:0005829">
    <property type="term" value="C:cytosol"/>
    <property type="evidence" value="ECO:0007669"/>
    <property type="project" value="GOC"/>
</dbReference>
<dbReference type="GO" id="GO:0036020">
    <property type="term" value="C:endolysosome membrane"/>
    <property type="evidence" value="ECO:0000314"/>
    <property type="project" value="UniProtKB"/>
</dbReference>
<dbReference type="GO" id="GO:0010008">
    <property type="term" value="C:endosome membrane"/>
    <property type="evidence" value="ECO:0000314"/>
    <property type="project" value="UniProtKB"/>
</dbReference>
<dbReference type="GO" id="GO:0031902">
    <property type="term" value="C:late endosome membrane"/>
    <property type="evidence" value="ECO:0007669"/>
    <property type="project" value="UniProtKB-SubCell"/>
</dbReference>
<dbReference type="GO" id="GO:0005765">
    <property type="term" value="C:lysosomal membrane"/>
    <property type="evidence" value="ECO:0000314"/>
    <property type="project" value="UniProtKB"/>
</dbReference>
<dbReference type="GO" id="GO:0005764">
    <property type="term" value="C:lysosome"/>
    <property type="evidence" value="ECO:0000314"/>
    <property type="project" value="ParkinsonsUK-UCL"/>
</dbReference>
<dbReference type="GO" id="GO:0033162">
    <property type="term" value="C:melanosome membrane"/>
    <property type="evidence" value="ECO:0000314"/>
    <property type="project" value="UniProtKB"/>
</dbReference>
<dbReference type="GO" id="GO:0034702">
    <property type="term" value="C:monoatomic ion channel complex"/>
    <property type="evidence" value="ECO:0007669"/>
    <property type="project" value="UniProtKB-KW"/>
</dbReference>
<dbReference type="GO" id="GO:0005262">
    <property type="term" value="F:calcium channel activity"/>
    <property type="evidence" value="ECO:0000314"/>
    <property type="project" value="UniProtKB"/>
</dbReference>
<dbReference type="GO" id="GO:0042802">
    <property type="term" value="F:identical protein binding"/>
    <property type="evidence" value="ECO:0000314"/>
    <property type="project" value="UniProtKB"/>
</dbReference>
<dbReference type="GO" id="GO:0097682">
    <property type="term" value="F:intracellularly phosphatidylinositol-3,5-bisphosphate-gated monatomic cation channel activity"/>
    <property type="evidence" value="ECO:0000314"/>
    <property type="project" value="UniProtKB"/>
</dbReference>
<dbReference type="GO" id="GO:0015280">
    <property type="term" value="F:ligand-gated sodium channel activity"/>
    <property type="evidence" value="ECO:0000314"/>
    <property type="project" value="UniProtKB"/>
</dbReference>
<dbReference type="GO" id="GO:0072345">
    <property type="term" value="F:NAADP-sensitive calcium-release channel activity"/>
    <property type="evidence" value="ECO:0000314"/>
    <property type="project" value="UniProtKB"/>
</dbReference>
<dbReference type="GO" id="GO:0080025">
    <property type="term" value="F:phosphatidylinositol-3,5-bisphosphate binding"/>
    <property type="evidence" value="ECO:0000314"/>
    <property type="project" value="UniProtKB"/>
</dbReference>
<dbReference type="GO" id="GO:0019901">
    <property type="term" value="F:protein kinase binding"/>
    <property type="evidence" value="ECO:0000353"/>
    <property type="project" value="UniProtKB"/>
</dbReference>
<dbReference type="GO" id="GO:0005245">
    <property type="term" value="F:voltage-gated calcium channel activity"/>
    <property type="evidence" value="ECO:0000250"/>
    <property type="project" value="UniProtKB"/>
</dbReference>
<dbReference type="GO" id="GO:0019722">
    <property type="term" value="P:calcium-mediated signaling"/>
    <property type="evidence" value="ECO:0000316"/>
    <property type="project" value="ParkinsonsUK-UCL"/>
</dbReference>
<dbReference type="GO" id="GO:0075509">
    <property type="term" value="P:endocytosis involved in viral entry into host cell"/>
    <property type="evidence" value="ECO:0000315"/>
    <property type="project" value="UniProtKB"/>
</dbReference>
<dbReference type="GO" id="GO:0090117">
    <property type="term" value="P:endosome to lysosome transport of low-density lipoprotein particle"/>
    <property type="evidence" value="ECO:0000250"/>
    <property type="project" value="UniProtKB"/>
</dbReference>
<dbReference type="GO" id="GO:0006874">
    <property type="term" value="P:intracellular calcium ion homeostasis"/>
    <property type="evidence" value="ECO:0000314"/>
    <property type="project" value="UniProtKB"/>
</dbReference>
<dbReference type="GO" id="GO:0051452">
    <property type="term" value="P:intracellular pH reduction"/>
    <property type="evidence" value="ECO:0000314"/>
    <property type="project" value="UniProtKB"/>
</dbReference>
<dbReference type="GO" id="GO:0007040">
    <property type="term" value="P:lysosome organization"/>
    <property type="evidence" value="ECO:0000316"/>
    <property type="project" value="ParkinsonsUK-UCL"/>
</dbReference>
<dbReference type="GO" id="GO:0034220">
    <property type="term" value="P:monoatomic ion transmembrane transport"/>
    <property type="evidence" value="ECO:0000304"/>
    <property type="project" value="Reactome"/>
</dbReference>
<dbReference type="GO" id="GO:0048086">
    <property type="term" value="P:negative regulation of developmental pigmentation"/>
    <property type="evidence" value="ECO:0000314"/>
    <property type="project" value="UniProtKB"/>
</dbReference>
<dbReference type="GO" id="GO:0019065">
    <property type="term" value="P:receptor-mediated endocytosis of virus by host cell"/>
    <property type="evidence" value="ECO:0000314"/>
    <property type="project" value="UniProtKB"/>
</dbReference>
<dbReference type="GO" id="GO:0010506">
    <property type="term" value="P:regulation of autophagy"/>
    <property type="evidence" value="ECO:0000316"/>
    <property type="project" value="ParkinsonsUK-UCL"/>
</dbReference>
<dbReference type="GO" id="GO:0017157">
    <property type="term" value="P:regulation of exocytosis"/>
    <property type="evidence" value="ECO:0000250"/>
    <property type="project" value="UniProtKB"/>
</dbReference>
<dbReference type="GO" id="GO:0051209">
    <property type="term" value="P:release of sequestered calcium ion into cytosol"/>
    <property type="evidence" value="ECO:0007669"/>
    <property type="project" value="Ensembl"/>
</dbReference>
<dbReference type="GO" id="GO:0033280">
    <property type="term" value="P:response to vitamin D"/>
    <property type="evidence" value="ECO:0007669"/>
    <property type="project" value="Ensembl"/>
</dbReference>
<dbReference type="GO" id="GO:0006939">
    <property type="term" value="P:smooth muscle contraction"/>
    <property type="evidence" value="ECO:0000250"/>
    <property type="project" value="UniProtKB"/>
</dbReference>
<dbReference type="GO" id="GO:0035725">
    <property type="term" value="P:sodium ion transmembrane transport"/>
    <property type="evidence" value="ECO:0000314"/>
    <property type="project" value="UniProtKB"/>
</dbReference>
<dbReference type="FunFam" id="1.10.287.70:FF:000104">
    <property type="entry name" value="Two pore calcium channel protein 2"/>
    <property type="match status" value="1"/>
</dbReference>
<dbReference type="FunFam" id="1.10.287.70:FF:000184">
    <property type="entry name" value="Two pore segment channel 2"/>
    <property type="match status" value="1"/>
</dbReference>
<dbReference type="FunFam" id="1.20.120.350:FF:000056">
    <property type="entry name" value="Two pore segment channel 2"/>
    <property type="match status" value="1"/>
</dbReference>
<dbReference type="FunFam" id="1.20.120.350:FF:000073">
    <property type="entry name" value="Two pore segment channel 2"/>
    <property type="match status" value="1"/>
</dbReference>
<dbReference type="Gene3D" id="1.10.287.70">
    <property type="match status" value="2"/>
</dbReference>
<dbReference type="Gene3D" id="1.20.120.350">
    <property type="entry name" value="Voltage-gated potassium channels. Chain C"/>
    <property type="match status" value="2"/>
</dbReference>
<dbReference type="InterPro" id="IPR005821">
    <property type="entry name" value="Ion_trans_dom"/>
</dbReference>
<dbReference type="InterPro" id="IPR028798">
    <property type="entry name" value="TPC2"/>
</dbReference>
<dbReference type="InterPro" id="IPR027359">
    <property type="entry name" value="Volt_channel_dom_sf"/>
</dbReference>
<dbReference type="PANTHER" id="PTHR46768">
    <property type="entry name" value="TWO PORE CALCIUM CHANNEL PROTEIN 2"/>
    <property type="match status" value="1"/>
</dbReference>
<dbReference type="PANTHER" id="PTHR46768:SF1">
    <property type="entry name" value="TWO PORE CHANNEL PROTEIN 2"/>
    <property type="match status" value="1"/>
</dbReference>
<dbReference type="Pfam" id="PF00520">
    <property type="entry name" value="Ion_trans"/>
    <property type="match status" value="2"/>
</dbReference>
<dbReference type="SUPFAM" id="SSF81324">
    <property type="entry name" value="Voltage-gated potassium channels"/>
    <property type="match status" value="2"/>
</dbReference>
<feature type="chain" id="PRO_0000276856" description="Two pore channel protein 2">
    <location>
        <begin position="1"/>
        <end position="752"/>
    </location>
</feature>
<feature type="topological domain" description="Cytoplasmic" evidence="3">
    <location>
        <begin position="1"/>
        <end position="84"/>
    </location>
</feature>
<feature type="transmembrane region" description="Helical; Name=S1 of repeat I" evidence="3">
    <location>
        <begin position="85"/>
        <end position="105"/>
    </location>
</feature>
<feature type="topological domain" description="Extracellular" evidence="3">
    <location>
        <begin position="106"/>
        <end position="127"/>
    </location>
</feature>
<feature type="transmembrane region" description="Helical; Name=S2 of repeat I" evidence="3">
    <location>
        <begin position="128"/>
        <end position="148"/>
    </location>
</feature>
<feature type="topological domain" description="Cytoplasmic" evidence="3">
    <location>
        <begin position="149"/>
        <end position="155"/>
    </location>
</feature>
<feature type="transmembrane region" description="Helical; Name=S3 of repeat I" evidence="3">
    <location>
        <begin position="156"/>
        <end position="176"/>
    </location>
</feature>
<feature type="topological domain" description="Extracellular" evidence="3">
    <location>
        <begin position="177"/>
        <end position="183"/>
    </location>
</feature>
<feature type="transmembrane region" description="Helical; Name=S4 of repeat I" evidence="3">
    <location>
        <begin position="184"/>
        <end position="204"/>
    </location>
</feature>
<feature type="topological domain" description="Cytoplasmic" evidence="3">
    <location>
        <begin position="205"/>
        <end position="218"/>
    </location>
</feature>
<feature type="transmembrane region" description="Helical; Name=S5 of repeat I" evidence="3">
    <location>
        <begin position="219"/>
        <end position="239"/>
    </location>
</feature>
<feature type="topological domain" description="Extracellular" evidence="3">
    <location>
        <begin position="240"/>
        <end position="254"/>
    </location>
</feature>
<feature type="intramembrane region" description="Helical; Pore-forming" evidence="3">
    <location>
        <begin position="255"/>
        <end position="279"/>
    </location>
</feature>
<feature type="topological domain" description="Extracellular" evidence="3">
    <location>
        <begin position="280"/>
        <end position="289"/>
    </location>
</feature>
<feature type="transmembrane region" description="Helical; Name=S6 of repeat I" evidence="3">
    <location>
        <begin position="290"/>
        <end position="310"/>
    </location>
</feature>
<feature type="topological domain" description="Cytoplasmic" evidence="3">
    <location>
        <begin position="311"/>
        <end position="436"/>
    </location>
</feature>
<feature type="transmembrane region" description="Helical; Name=S1 of repeat II" evidence="3">
    <location>
        <begin position="437"/>
        <end position="459"/>
    </location>
</feature>
<feature type="topological domain" description="Extracellular" evidence="3">
    <location>
        <begin position="460"/>
        <end position="465"/>
    </location>
</feature>
<feature type="transmembrane region" description="Helical; Name=S2 of repeat II" evidence="3">
    <location>
        <begin position="466"/>
        <end position="486"/>
    </location>
</feature>
<feature type="topological domain" description="Cytoplasmic" evidence="3">
    <location>
        <begin position="487"/>
        <end position="502"/>
    </location>
</feature>
<feature type="transmembrane region" description="Helical; Name=S3 of repeat II" evidence="3">
    <location>
        <begin position="503"/>
        <end position="523"/>
    </location>
</feature>
<feature type="topological domain" description="Extracellular" evidence="3">
    <location>
        <begin position="524"/>
        <end position="554"/>
    </location>
</feature>
<feature type="transmembrane region" description="Helical; Name=S4 of repeat II" evidence="3">
    <location>
        <begin position="555"/>
        <end position="575"/>
    </location>
</feature>
<feature type="topological domain" description="Cytoplasmic" evidence="3">
    <location>
        <begin position="576"/>
        <end position="580"/>
    </location>
</feature>
<feature type="transmembrane region" description="Helical; Name=S5 of repeat II" evidence="3">
    <location>
        <begin position="581"/>
        <end position="601"/>
    </location>
</feature>
<feature type="topological domain" description="Extracellular" evidence="3">
    <location>
        <begin position="602"/>
        <end position="635"/>
    </location>
</feature>
<feature type="intramembrane region" description="Helical; Pore-forming" evidence="3">
    <location>
        <begin position="636"/>
        <end position="658"/>
    </location>
</feature>
<feature type="topological domain" description="Extracellular" evidence="3">
    <location>
        <begin position="659"/>
        <end position="673"/>
    </location>
</feature>
<feature type="transmembrane region" description="Helical; Name=S6 of repeat II" evidence="3">
    <location>
        <begin position="674"/>
        <end position="694"/>
    </location>
</feature>
<feature type="topological domain" description="Cytoplasmic" evidence="3">
    <location>
        <begin position="695"/>
        <end position="752"/>
    </location>
</feature>
<feature type="region of interest" description="Interaction with phosphatidylinositol 3,5-bisphosphate" evidence="18">
    <location>
        <begin position="203"/>
        <end position="207"/>
    </location>
</feature>
<feature type="glycosylation site" description="N-linked (GlcNAc...) asparagine" evidence="3">
    <location>
        <position position="611"/>
    </location>
</feature>
<feature type="glycosylation site" description="N-linked (GlcNAc...) asparagine" evidence="3">
    <location>
        <position position="618"/>
    </location>
</feature>
<feature type="sequence variant" id="VAR_030492" description="In dbSNP:rs3750965.">
    <original>K</original>
    <variation>R</variation>
    <location>
        <position position="376"/>
    </location>
</feature>
<feature type="sequence variant" id="VAR_047956" description="Associated with SHEP10; gain of function; increased sodium currents; dbSNP:rs35264875." evidence="6 20">
    <original>M</original>
    <variation>L</variation>
    <location>
        <position position="484"/>
    </location>
</feature>
<feature type="sequence variant" id="VAR_030493" description="In dbSNP:rs2376558." evidence="4 5 7">
    <original>L</original>
    <variation>P</variation>
    <location>
        <position position="564"/>
    </location>
</feature>
<feature type="sequence variant" id="VAR_030494" description="Associated with SHEP10; dbSNP:rs3829241." evidence="4 5 6 7">
    <original>G</original>
    <variation>E</variation>
    <location>
        <position position="734"/>
    </location>
</feature>
<feature type="mutagenesis site" description="Localizes at the plasma membrane." evidence="9 14">
    <original>LL</original>
    <variation>AA</variation>
    <location>
        <begin position="11"/>
        <end position="12"/>
    </location>
</feature>
<feature type="mutagenesis site" description="Strongly reduces binding with phosphatidylinositol 3,5-bisphosphate." evidence="18">
    <original>K</original>
    <variation>A</variation>
    <location>
        <position position="203"/>
    </location>
</feature>
<feature type="mutagenesis site" description="Strongly reduces binding with phosphatidylinositol 3,5-bisphosphate. Decreases sodium transport. No effect on calcium release." evidence="18 20">
    <original>K</original>
    <variation>A</variation>
    <location>
        <position position="204"/>
    </location>
</feature>
<feature type="mutagenesis site" description="Reduces binding with phosphatidylinositol 3,5-bisphosphate." evidence="18">
    <original>K</original>
    <variation>A</variation>
    <location>
        <position position="207"/>
    </location>
</feature>
<feature type="mutagenesis site" description="No effect on lysosomal location. Loss of NAADP-sensitive calcium-release channel activity. Inhibits Ebola virus infection." evidence="9 16">
    <original>L</original>
    <variation>P</variation>
    <location>
        <position position="265"/>
    </location>
</feature>
<feature type="mutagenesis site" description="Not activated by phosphatidylinositol 3,5-bisphosphate." evidence="11">
    <original>D</original>
    <variation>K</variation>
    <location>
        <position position="276"/>
    </location>
</feature>
<feature type="mutagenesis site" description="Reduces binding with phosphatidylinositol 3,5-bisphosphate." evidence="18">
    <original>S</original>
    <variation>A</variation>
    <location>
        <position position="322"/>
    </location>
</feature>
<feature type="mutagenesis site" description="Reduces binding with phosphatidylinositol 3,5-bisphosphate." evidence="18">
    <original>R</original>
    <variation>A</variation>
    <location>
        <position position="329"/>
    </location>
</feature>
<feature type="mutagenesis site" description="Requires both phosphatidylinositol 3,5-bisphosphate and a positive membrane potential for activation." evidence="18">
    <original>I</original>
    <variation>R</variation>
    <location>
        <position position="551"/>
    </location>
</feature>
<feature type="helix" evidence="31">
    <location>
        <begin position="38"/>
        <end position="57"/>
    </location>
</feature>
<feature type="helix" evidence="31">
    <location>
        <begin position="68"/>
        <end position="77"/>
    </location>
</feature>
<feature type="helix" evidence="31">
    <location>
        <begin position="80"/>
        <end position="95"/>
    </location>
</feature>
<feature type="helix" evidence="31">
    <location>
        <begin position="96"/>
        <end position="99"/>
    </location>
</feature>
<feature type="strand" evidence="31">
    <location>
        <begin position="100"/>
        <end position="102"/>
    </location>
</feature>
<feature type="turn" evidence="31">
    <location>
        <begin position="111"/>
        <end position="113"/>
    </location>
</feature>
<feature type="helix" evidence="31">
    <location>
        <begin position="122"/>
        <end position="146"/>
    </location>
</feature>
<feature type="helix" evidence="31">
    <location>
        <begin position="149"/>
        <end position="154"/>
    </location>
</feature>
<feature type="helix" evidence="31">
    <location>
        <begin position="156"/>
        <end position="177"/>
    </location>
</feature>
<feature type="helix" evidence="31">
    <location>
        <begin position="187"/>
        <end position="197"/>
    </location>
</feature>
<feature type="helix" evidence="31">
    <location>
        <begin position="200"/>
        <end position="237"/>
    </location>
</feature>
<feature type="helix" evidence="31">
    <location>
        <begin position="246"/>
        <end position="253"/>
    </location>
</feature>
<feature type="strand" evidence="31">
    <location>
        <begin position="255"/>
        <end position="257"/>
    </location>
</feature>
<feature type="helix" evidence="31">
    <location>
        <begin position="258"/>
        <end position="269"/>
    </location>
</feature>
<feature type="helix" evidence="31">
    <location>
        <begin position="274"/>
        <end position="284"/>
    </location>
</feature>
<feature type="helix" evidence="31">
    <location>
        <begin position="288"/>
        <end position="298"/>
    </location>
</feature>
<feature type="turn" evidence="31">
    <location>
        <begin position="299"/>
        <end position="301"/>
    </location>
</feature>
<feature type="helix" evidence="31">
    <location>
        <begin position="302"/>
        <end position="312"/>
    </location>
</feature>
<feature type="helix" evidence="31">
    <location>
        <begin position="318"/>
        <end position="342"/>
    </location>
</feature>
<feature type="turn" evidence="31">
    <location>
        <begin position="343"/>
        <end position="345"/>
    </location>
</feature>
<feature type="helix" evidence="31">
    <location>
        <begin position="359"/>
        <end position="368"/>
    </location>
</feature>
<feature type="helix" evidence="31">
    <location>
        <begin position="373"/>
        <end position="385"/>
    </location>
</feature>
<feature type="helix" evidence="31">
    <location>
        <begin position="393"/>
        <end position="399"/>
    </location>
</feature>
<feature type="helix" evidence="31">
    <location>
        <begin position="400"/>
        <end position="404"/>
    </location>
</feature>
<feature type="helix" evidence="31">
    <location>
        <begin position="420"/>
        <end position="430"/>
    </location>
</feature>
<feature type="helix" evidence="31">
    <location>
        <begin position="433"/>
        <end position="458"/>
    </location>
</feature>
<feature type="helix" evidence="31">
    <location>
        <begin position="467"/>
        <end position="491"/>
    </location>
</feature>
<feature type="helix" evidence="31">
    <location>
        <begin position="493"/>
        <end position="498"/>
    </location>
</feature>
<feature type="helix" evidence="31">
    <location>
        <begin position="500"/>
        <end position="523"/>
    </location>
</feature>
<feature type="helix" evidence="31">
    <location>
        <begin position="540"/>
        <end position="548"/>
    </location>
</feature>
<feature type="helix" evidence="31">
    <location>
        <begin position="549"/>
        <end position="552"/>
    </location>
</feature>
<feature type="helix" evidence="31">
    <location>
        <begin position="553"/>
        <end position="556"/>
    </location>
</feature>
<feature type="helix" evidence="31">
    <location>
        <begin position="557"/>
        <end position="561"/>
    </location>
</feature>
<feature type="helix" evidence="31">
    <location>
        <begin position="563"/>
        <end position="577"/>
    </location>
</feature>
<feature type="helix" evidence="31">
    <location>
        <begin position="579"/>
        <end position="600"/>
    </location>
</feature>
<feature type="strand" evidence="31">
    <location>
        <begin position="601"/>
        <end position="603"/>
    </location>
</feature>
<feature type="turn" evidence="31">
    <location>
        <begin position="626"/>
        <end position="630"/>
    </location>
</feature>
<feature type="helix" evidence="30">
    <location>
        <begin position="631"/>
        <end position="633"/>
    </location>
</feature>
<feature type="helix" evidence="31">
    <location>
        <begin position="639"/>
        <end position="650"/>
    </location>
</feature>
<feature type="helix" evidence="31">
    <location>
        <begin position="655"/>
        <end position="666"/>
    </location>
</feature>
<feature type="helix" evidence="31">
    <location>
        <begin position="670"/>
        <end position="680"/>
    </location>
</feature>
<feature type="turn" evidence="31">
    <location>
        <begin position="681"/>
        <end position="683"/>
    </location>
</feature>
<feature type="helix" evidence="31">
    <location>
        <begin position="684"/>
        <end position="700"/>
    </location>
</feature>